<proteinExistence type="inferred from homology"/>
<protein>
    <recommendedName>
        <fullName evidence="1">Anaerobic glycerol-3-phosphate dehydrogenase subunit B</fullName>
        <shortName evidence="1">Anaerobic G-3-P dehydrogenase subunit B</shortName>
        <shortName evidence="1">Anaerobic G3Pdhase B</shortName>
        <ecNumber evidence="1">1.1.5.3</ecNumber>
    </recommendedName>
</protein>
<sequence length="419" mass="45342">MRFDTVIMGGGLAGLLCGLQLQKHGLRCAIVTRGQSALHFSSGSLDLLSHLPDGQPVTDIHSGLESLRQQAPAHPYTLLGPQRVLDLACQAQALIAESGAQLQGSVELAHQRITPLGTLRSTWLSSPEVPVWPLPAKKICVVGISGLMDFQAHLAAASLRELDLAVETAEIELPELDVLRNNATEFRAVNIARFLDNEENWPLIIDALIPVANTCEMILMPACFGLADDKLWRWLNEKLPCSLMLLPTLPPSVLGIRLQNQLQRQFVRQGGVWMPGDEVKKVTCKNGVVNEIWTRNHADIPLRPRFAVLASGSFFSGGLVAERDGIREPILGLDVLQTATRGEWYKGDFFAPQPWQQFGVTTDEALRPSQAGQTIENLFAIGSVLGGFDPIAQGCGGGVCAVSALHAAQQIAQRAGGQQ</sequence>
<dbReference type="EC" id="1.1.5.3" evidence="1"/>
<dbReference type="EMBL" id="CP000243">
    <property type="protein sequence ID" value="ABE07989.1"/>
    <property type="status" value="ALT_INIT"/>
    <property type="molecule type" value="Genomic_DNA"/>
</dbReference>
<dbReference type="RefSeq" id="WP_001209932.1">
    <property type="nucleotide sequence ID" value="NZ_CP064825.1"/>
</dbReference>
<dbReference type="KEGG" id="eci:UTI89_C2522"/>
<dbReference type="HOGENOM" id="CLU_047793_0_0_6"/>
<dbReference type="UniPathway" id="UPA00618">
    <property type="reaction ID" value="UER00673"/>
</dbReference>
<dbReference type="Proteomes" id="UP000001952">
    <property type="component" value="Chromosome"/>
</dbReference>
<dbReference type="GO" id="GO:0009331">
    <property type="term" value="C:glycerol-3-phosphate dehydrogenase (FAD) complex"/>
    <property type="evidence" value="ECO:0007669"/>
    <property type="project" value="InterPro"/>
</dbReference>
<dbReference type="GO" id="GO:0004368">
    <property type="term" value="F:glycerol-3-phosphate dehydrogenase (quinone) activity"/>
    <property type="evidence" value="ECO:0007669"/>
    <property type="project" value="UniProtKB-UniRule"/>
</dbReference>
<dbReference type="GO" id="GO:0009061">
    <property type="term" value="P:anaerobic respiration"/>
    <property type="evidence" value="ECO:0007669"/>
    <property type="project" value="TreeGrafter"/>
</dbReference>
<dbReference type="GO" id="GO:0019563">
    <property type="term" value="P:glycerol catabolic process"/>
    <property type="evidence" value="ECO:0007669"/>
    <property type="project" value="UniProtKB-UniRule"/>
</dbReference>
<dbReference type="GO" id="GO:0046168">
    <property type="term" value="P:glycerol-3-phosphate catabolic process"/>
    <property type="evidence" value="ECO:0007669"/>
    <property type="project" value="TreeGrafter"/>
</dbReference>
<dbReference type="Gene3D" id="3.50.50.60">
    <property type="entry name" value="FAD/NAD(P)-binding domain"/>
    <property type="match status" value="1"/>
</dbReference>
<dbReference type="HAMAP" id="MF_00753">
    <property type="entry name" value="Glycerol3P_GlpB"/>
    <property type="match status" value="1"/>
</dbReference>
<dbReference type="InterPro" id="IPR003953">
    <property type="entry name" value="FAD-dep_OxRdtase_2_FAD-bd"/>
</dbReference>
<dbReference type="InterPro" id="IPR050315">
    <property type="entry name" value="FAD-oxidoreductase_2"/>
</dbReference>
<dbReference type="InterPro" id="IPR036188">
    <property type="entry name" value="FAD/NAD-bd_sf"/>
</dbReference>
<dbReference type="InterPro" id="IPR009158">
    <property type="entry name" value="G3P_DH_GlpB_su"/>
</dbReference>
<dbReference type="NCBIfam" id="TIGR03378">
    <property type="entry name" value="glycerol3P_GlpB"/>
    <property type="match status" value="1"/>
</dbReference>
<dbReference type="NCBIfam" id="NF003718">
    <property type="entry name" value="PRK05329.1-1"/>
    <property type="match status" value="1"/>
</dbReference>
<dbReference type="NCBIfam" id="NF003719">
    <property type="entry name" value="PRK05329.1-2"/>
    <property type="match status" value="1"/>
</dbReference>
<dbReference type="NCBIfam" id="NF003720">
    <property type="entry name" value="PRK05329.1-3"/>
    <property type="match status" value="1"/>
</dbReference>
<dbReference type="NCBIfam" id="NF003721">
    <property type="entry name" value="PRK05329.1-4"/>
    <property type="match status" value="1"/>
</dbReference>
<dbReference type="PANTHER" id="PTHR43400:SF11">
    <property type="entry name" value="ANAEROBIC GLYCEROL-3-PHOSPHATE DEHYDROGENASE SUBUNIT B"/>
    <property type="match status" value="1"/>
</dbReference>
<dbReference type="PANTHER" id="PTHR43400">
    <property type="entry name" value="FUMARATE REDUCTASE"/>
    <property type="match status" value="1"/>
</dbReference>
<dbReference type="Pfam" id="PF00890">
    <property type="entry name" value="FAD_binding_2"/>
    <property type="match status" value="1"/>
</dbReference>
<dbReference type="PIRSF" id="PIRSF000141">
    <property type="entry name" value="Anaerobic_G3P_dh"/>
    <property type="match status" value="1"/>
</dbReference>
<dbReference type="SUPFAM" id="SSF51905">
    <property type="entry name" value="FAD/NAD(P)-binding domain"/>
    <property type="match status" value="1"/>
</dbReference>
<organism>
    <name type="scientific">Escherichia coli (strain UTI89 / UPEC)</name>
    <dbReference type="NCBI Taxonomy" id="364106"/>
    <lineage>
        <taxon>Bacteria</taxon>
        <taxon>Pseudomonadati</taxon>
        <taxon>Pseudomonadota</taxon>
        <taxon>Gammaproteobacteria</taxon>
        <taxon>Enterobacterales</taxon>
        <taxon>Enterobacteriaceae</taxon>
        <taxon>Escherichia</taxon>
    </lineage>
</organism>
<name>GLPB_ECOUT</name>
<comment type="function">
    <text evidence="1">Conversion of glycerol 3-phosphate to dihydroxyacetone. Uses fumarate or nitrate as electron acceptor.</text>
</comment>
<comment type="catalytic activity">
    <reaction evidence="1">
        <text>a quinone + sn-glycerol 3-phosphate = dihydroxyacetone phosphate + a quinol</text>
        <dbReference type="Rhea" id="RHEA:18977"/>
        <dbReference type="ChEBI" id="CHEBI:24646"/>
        <dbReference type="ChEBI" id="CHEBI:57597"/>
        <dbReference type="ChEBI" id="CHEBI:57642"/>
        <dbReference type="ChEBI" id="CHEBI:132124"/>
        <dbReference type="EC" id="1.1.5.3"/>
    </reaction>
</comment>
<comment type="cofactor">
    <cofactor evidence="1">
        <name>FMN</name>
        <dbReference type="ChEBI" id="CHEBI:58210"/>
    </cofactor>
</comment>
<comment type="pathway">
    <text evidence="1">Polyol metabolism; glycerol degradation via glycerol kinase pathway; glycerone phosphate from sn-glycerol 3-phosphate (anaerobic route): step 1/1.</text>
</comment>
<comment type="subunit">
    <text evidence="1">Composed of a catalytic GlpA/B dimer and of membrane bound GlpC.</text>
</comment>
<comment type="similarity">
    <text evidence="1">Belongs to the anaerobic G-3-P dehydrogenase subunit B family.</text>
</comment>
<comment type="sequence caution" evidence="2">
    <conflict type="erroneous initiation">
        <sequence resource="EMBL-CDS" id="ABE07989"/>
    </conflict>
</comment>
<feature type="chain" id="PRO_0000258900" description="Anaerobic glycerol-3-phosphate dehydrogenase subunit B">
    <location>
        <begin position="1"/>
        <end position="419"/>
    </location>
</feature>
<gene>
    <name evidence="1" type="primary">glpB</name>
    <name type="ordered locus">UTI89_C2522</name>
</gene>
<accession>Q1R9H5</accession>
<keyword id="KW-0285">Flavoprotein</keyword>
<keyword id="KW-0288">FMN</keyword>
<keyword id="KW-0560">Oxidoreductase</keyword>
<evidence type="ECO:0000255" key="1">
    <source>
        <dbReference type="HAMAP-Rule" id="MF_00753"/>
    </source>
</evidence>
<evidence type="ECO:0000305" key="2"/>
<reference key="1">
    <citation type="journal article" date="2006" name="Proc. Natl. Acad. Sci. U.S.A.">
        <title>Identification of genes subject to positive selection in uropathogenic strains of Escherichia coli: a comparative genomics approach.</title>
        <authorList>
            <person name="Chen S.L."/>
            <person name="Hung C.-S."/>
            <person name="Xu J."/>
            <person name="Reigstad C.S."/>
            <person name="Magrini V."/>
            <person name="Sabo A."/>
            <person name="Blasiar D."/>
            <person name="Bieri T."/>
            <person name="Meyer R.R."/>
            <person name="Ozersky P."/>
            <person name="Armstrong J.R."/>
            <person name="Fulton R.S."/>
            <person name="Latreille J.P."/>
            <person name="Spieth J."/>
            <person name="Hooton T.M."/>
            <person name="Mardis E.R."/>
            <person name="Hultgren S.J."/>
            <person name="Gordon J.I."/>
        </authorList>
    </citation>
    <scope>NUCLEOTIDE SEQUENCE [LARGE SCALE GENOMIC DNA]</scope>
    <source>
        <strain>UTI89 / UPEC</strain>
    </source>
</reference>